<name>THIG_PECCP</name>
<organism>
    <name type="scientific">Pectobacterium carotovorum subsp. carotovorum (strain PC1)</name>
    <dbReference type="NCBI Taxonomy" id="561230"/>
    <lineage>
        <taxon>Bacteria</taxon>
        <taxon>Pseudomonadati</taxon>
        <taxon>Pseudomonadota</taxon>
        <taxon>Gammaproteobacteria</taxon>
        <taxon>Enterobacterales</taxon>
        <taxon>Pectobacteriaceae</taxon>
        <taxon>Pectobacterium</taxon>
    </lineage>
</organism>
<sequence length="261" mass="27320">MLHIADTTLTSRLLTGTGKFATPELMLAALEASGSQLVTMAMKRVDLNGGNDAILAPLRQLGIKLLPNTSGAKTADEAIFAARLAREALGTHWLKLEIHPDVKYLLPDPIETLKAAEQLVKEGFTVLPYCGADPVLCKRLEEVGCAAVMPLGAPIGSNQGLQTRDFLRIIIEQARVPVIVDAGIGAPSQAADALEMGADAVLVNTAIAVARDPVAMARAFRLAVEAGGLARQAGLGSKQFVASATSPLTGFLHQQAEGAVR</sequence>
<feature type="chain" id="PRO_1000206139" description="Thiazole synthase">
    <location>
        <begin position="1"/>
        <end position="261"/>
    </location>
</feature>
<feature type="active site" description="Schiff-base intermediate with DXP" evidence="1">
    <location>
        <position position="95"/>
    </location>
</feature>
<feature type="binding site" evidence="1">
    <location>
        <position position="156"/>
    </location>
    <ligand>
        <name>1-deoxy-D-xylulose 5-phosphate</name>
        <dbReference type="ChEBI" id="CHEBI:57792"/>
    </ligand>
</feature>
<feature type="binding site" evidence="1">
    <location>
        <begin position="182"/>
        <end position="183"/>
    </location>
    <ligand>
        <name>1-deoxy-D-xylulose 5-phosphate</name>
        <dbReference type="ChEBI" id="CHEBI:57792"/>
    </ligand>
</feature>
<feature type="binding site" evidence="1">
    <location>
        <begin position="204"/>
        <end position="205"/>
    </location>
    <ligand>
        <name>1-deoxy-D-xylulose 5-phosphate</name>
        <dbReference type="ChEBI" id="CHEBI:57792"/>
    </ligand>
</feature>
<comment type="function">
    <text evidence="1">Catalyzes the rearrangement of 1-deoxy-D-xylulose 5-phosphate (DXP) to produce the thiazole phosphate moiety of thiamine. Sulfur is provided by the thiocarboxylate moiety of the carrier protein ThiS. In vitro, sulfur can be provided by H(2)S.</text>
</comment>
<comment type="catalytic activity">
    <reaction evidence="1">
        <text>[ThiS sulfur-carrier protein]-C-terminal-Gly-aminoethanethioate + 2-iminoacetate + 1-deoxy-D-xylulose 5-phosphate = [ThiS sulfur-carrier protein]-C-terminal Gly-Gly + 2-[(2R,5Z)-2-carboxy-4-methylthiazol-5(2H)-ylidene]ethyl phosphate + 2 H2O + H(+)</text>
        <dbReference type="Rhea" id="RHEA:26297"/>
        <dbReference type="Rhea" id="RHEA-COMP:12909"/>
        <dbReference type="Rhea" id="RHEA-COMP:19908"/>
        <dbReference type="ChEBI" id="CHEBI:15377"/>
        <dbReference type="ChEBI" id="CHEBI:15378"/>
        <dbReference type="ChEBI" id="CHEBI:57792"/>
        <dbReference type="ChEBI" id="CHEBI:62899"/>
        <dbReference type="ChEBI" id="CHEBI:77846"/>
        <dbReference type="ChEBI" id="CHEBI:90778"/>
        <dbReference type="ChEBI" id="CHEBI:232372"/>
        <dbReference type="EC" id="2.8.1.10"/>
    </reaction>
</comment>
<comment type="pathway">
    <text evidence="1">Cofactor biosynthesis; thiamine diphosphate biosynthesis.</text>
</comment>
<comment type="subunit">
    <text evidence="1">Homotetramer. Forms heterodimers with either ThiH or ThiS.</text>
</comment>
<comment type="subcellular location">
    <subcellularLocation>
        <location evidence="1">Cytoplasm</location>
    </subcellularLocation>
</comment>
<comment type="similarity">
    <text evidence="1">Belongs to the ThiG family.</text>
</comment>
<keyword id="KW-0963">Cytoplasm</keyword>
<keyword id="KW-0704">Schiff base</keyword>
<keyword id="KW-0784">Thiamine biosynthesis</keyword>
<keyword id="KW-0808">Transferase</keyword>
<gene>
    <name evidence="1" type="primary">thiG</name>
    <name type="ordered locus">PC1_0212</name>
</gene>
<reference key="1">
    <citation type="submission" date="2009-07" db="EMBL/GenBank/DDBJ databases">
        <title>Complete sequence of Pectobacterium carotovorum subsp. carotovorum PC1.</title>
        <authorList>
            <consortium name="US DOE Joint Genome Institute"/>
            <person name="Lucas S."/>
            <person name="Copeland A."/>
            <person name="Lapidus A."/>
            <person name="Glavina del Rio T."/>
            <person name="Tice H."/>
            <person name="Bruce D."/>
            <person name="Goodwin L."/>
            <person name="Pitluck S."/>
            <person name="Munk A.C."/>
            <person name="Brettin T."/>
            <person name="Detter J.C."/>
            <person name="Han C."/>
            <person name="Tapia R."/>
            <person name="Larimer F."/>
            <person name="Land M."/>
            <person name="Hauser L."/>
            <person name="Kyrpides N."/>
            <person name="Mikhailova N."/>
            <person name="Balakrishnan V."/>
            <person name="Glasner J."/>
            <person name="Perna N.T."/>
        </authorList>
    </citation>
    <scope>NUCLEOTIDE SEQUENCE [LARGE SCALE GENOMIC DNA]</scope>
    <source>
        <strain>PC1</strain>
    </source>
</reference>
<protein>
    <recommendedName>
        <fullName evidence="1">Thiazole synthase</fullName>
        <ecNumber evidence="1">2.8.1.10</ecNumber>
    </recommendedName>
</protein>
<evidence type="ECO:0000255" key="1">
    <source>
        <dbReference type="HAMAP-Rule" id="MF_00443"/>
    </source>
</evidence>
<proteinExistence type="inferred from homology"/>
<dbReference type="EC" id="2.8.1.10" evidence="1"/>
<dbReference type="EMBL" id="CP001657">
    <property type="protein sequence ID" value="ACT11272.1"/>
    <property type="molecule type" value="Genomic_DNA"/>
</dbReference>
<dbReference type="RefSeq" id="WP_012772942.1">
    <property type="nucleotide sequence ID" value="NC_012917.1"/>
</dbReference>
<dbReference type="SMR" id="C6DHS2"/>
<dbReference type="STRING" id="561230.PC1_0212"/>
<dbReference type="KEGG" id="pct:PC1_0212"/>
<dbReference type="eggNOG" id="COG2022">
    <property type="taxonomic scope" value="Bacteria"/>
</dbReference>
<dbReference type="HOGENOM" id="CLU_062233_1_0_6"/>
<dbReference type="OrthoDB" id="9805935at2"/>
<dbReference type="UniPathway" id="UPA00060"/>
<dbReference type="Proteomes" id="UP000002736">
    <property type="component" value="Chromosome"/>
</dbReference>
<dbReference type="GO" id="GO:0005737">
    <property type="term" value="C:cytoplasm"/>
    <property type="evidence" value="ECO:0007669"/>
    <property type="project" value="UniProtKB-SubCell"/>
</dbReference>
<dbReference type="GO" id="GO:1990107">
    <property type="term" value="F:thiazole synthase activity"/>
    <property type="evidence" value="ECO:0007669"/>
    <property type="project" value="UniProtKB-EC"/>
</dbReference>
<dbReference type="GO" id="GO:0009229">
    <property type="term" value="P:thiamine diphosphate biosynthetic process"/>
    <property type="evidence" value="ECO:0007669"/>
    <property type="project" value="UniProtKB-UniRule"/>
</dbReference>
<dbReference type="CDD" id="cd04728">
    <property type="entry name" value="ThiG"/>
    <property type="match status" value="1"/>
</dbReference>
<dbReference type="FunFam" id="3.20.20.70:FF:000049">
    <property type="entry name" value="Thiazole synthase"/>
    <property type="match status" value="1"/>
</dbReference>
<dbReference type="Gene3D" id="3.20.20.70">
    <property type="entry name" value="Aldolase class I"/>
    <property type="match status" value="1"/>
</dbReference>
<dbReference type="HAMAP" id="MF_00443">
    <property type="entry name" value="ThiG"/>
    <property type="match status" value="1"/>
</dbReference>
<dbReference type="InterPro" id="IPR013785">
    <property type="entry name" value="Aldolase_TIM"/>
</dbReference>
<dbReference type="InterPro" id="IPR033983">
    <property type="entry name" value="Thiazole_synthase_ThiG"/>
</dbReference>
<dbReference type="InterPro" id="IPR008867">
    <property type="entry name" value="ThiG"/>
</dbReference>
<dbReference type="PANTHER" id="PTHR34266">
    <property type="entry name" value="THIAZOLE SYNTHASE"/>
    <property type="match status" value="1"/>
</dbReference>
<dbReference type="PANTHER" id="PTHR34266:SF2">
    <property type="entry name" value="THIAZOLE SYNTHASE"/>
    <property type="match status" value="1"/>
</dbReference>
<dbReference type="Pfam" id="PF05690">
    <property type="entry name" value="ThiG"/>
    <property type="match status" value="1"/>
</dbReference>
<dbReference type="SUPFAM" id="SSF110399">
    <property type="entry name" value="ThiG-like"/>
    <property type="match status" value="1"/>
</dbReference>
<accession>C6DHS2</accession>